<protein>
    <recommendedName>
        <fullName evidence="1">Pyridoxine 5'-phosphate synthase</fullName>
        <shortName evidence="1">PNP synthase</shortName>
        <ecNumber evidence="1">2.6.99.2</ecNumber>
    </recommendedName>
</protein>
<comment type="function">
    <text evidence="1">Catalyzes the complicated ring closure reaction between the two acyclic compounds 1-deoxy-D-xylulose-5-phosphate (DXP) and 3-amino-2-oxopropyl phosphate (1-amino-acetone-3-phosphate or AAP) to form pyridoxine 5'-phosphate (PNP) and inorganic phosphate.</text>
</comment>
<comment type="catalytic activity">
    <reaction evidence="1">
        <text>3-amino-2-oxopropyl phosphate + 1-deoxy-D-xylulose 5-phosphate = pyridoxine 5'-phosphate + phosphate + 2 H2O + H(+)</text>
        <dbReference type="Rhea" id="RHEA:15265"/>
        <dbReference type="ChEBI" id="CHEBI:15377"/>
        <dbReference type="ChEBI" id="CHEBI:15378"/>
        <dbReference type="ChEBI" id="CHEBI:43474"/>
        <dbReference type="ChEBI" id="CHEBI:57279"/>
        <dbReference type="ChEBI" id="CHEBI:57792"/>
        <dbReference type="ChEBI" id="CHEBI:58589"/>
        <dbReference type="EC" id="2.6.99.2"/>
    </reaction>
</comment>
<comment type="pathway">
    <text evidence="1">Cofactor biosynthesis; pyridoxine 5'-phosphate biosynthesis; pyridoxine 5'-phosphate from D-erythrose 4-phosphate: step 5/5.</text>
</comment>
<comment type="subunit">
    <text evidence="1">Homooctamer; tetramer of dimers.</text>
</comment>
<comment type="subcellular location">
    <subcellularLocation>
        <location evidence="1">Cytoplasm</location>
    </subcellularLocation>
</comment>
<comment type="similarity">
    <text evidence="1">Belongs to the PNP synthase family.</text>
</comment>
<proteinExistence type="inferred from homology"/>
<sequence>MLLGVNIDHIATVRNARGTTYPSPVEAALVAETHGADLITMHLREDRRHIKDADVFAVKNAIRTRLNLEMALTEEMLENALKVMPEDVCIVPEKRQEITTEGGLDVLAQQEKIAGFTKILTDAGIRVSLFIDADDRQIQAAYDVGAPVVELHTGAYADARSHAEQLKQFERLQNGAHFAGDLGLVVNAGHGLTIHNVTPIAQILAIRELNIGHSLIAQALFLGLPEAVRQMKEAMFRARLLP</sequence>
<dbReference type="EC" id="2.6.99.2" evidence="1"/>
<dbReference type="EMBL" id="AF194079">
    <property type="protein sequence ID" value="AAF08822.1"/>
    <property type="molecule type" value="Genomic_DNA"/>
</dbReference>
<dbReference type="SMR" id="Q9RML6"/>
<dbReference type="OMA" id="ERHIRYQ"/>
<dbReference type="UniPathway" id="UPA00244">
    <property type="reaction ID" value="UER00313"/>
</dbReference>
<dbReference type="GO" id="GO:0005829">
    <property type="term" value="C:cytosol"/>
    <property type="evidence" value="ECO:0007669"/>
    <property type="project" value="TreeGrafter"/>
</dbReference>
<dbReference type="GO" id="GO:0033856">
    <property type="term" value="F:pyridoxine 5'-phosphate synthase activity"/>
    <property type="evidence" value="ECO:0007669"/>
    <property type="project" value="UniProtKB-EC"/>
</dbReference>
<dbReference type="GO" id="GO:0008615">
    <property type="term" value="P:pyridoxine biosynthetic process"/>
    <property type="evidence" value="ECO:0007669"/>
    <property type="project" value="UniProtKB-UniRule"/>
</dbReference>
<dbReference type="CDD" id="cd00003">
    <property type="entry name" value="PNPsynthase"/>
    <property type="match status" value="1"/>
</dbReference>
<dbReference type="FunFam" id="3.20.20.70:FF:000247">
    <property type="entry name" value="Pyridoxine 5'-phosphate synthase"/>
    <property type="match status" value="1"/>
</dbReference>
<dbReference type="Gene3D" id="3.20.20.70">
    <property type="entry name" value="Aldolase class I"/>
    <property type="match status" value="1"/>
</dbReference>
<dbReference type="HAMAP" id="MF_00279">
    <property type="entry name" value="PdxJ"/>
    <property type="match status" value="1"/>
</dbReference>
<dbReference type="InterPro" id="IPR013785">
    <property type="entry name" value="Aldolase_TIM"/>
</dbReference>
<dbReference type="InterPro" id="IPR004569">
    <property type="entry name" value="PyrdxlP_synth_PdxJ"/>
</dbReference>
<dbReference type="InterPro" id="IPR036130">
    <property type="entry name" value="Pyridoxine-5'_phos_synth"/>
</dbReference>
<dbReference type="NCBIfam" id="TIGR00559">
    <property type="entry name" value="pdxJ"/>
    <property type="match status" value="1"/>
</dbReference>
<dbReference type="NCBIfam" id="NF003623">
    <property type="entry name" value="PRK05265.1-1"/>
    <property type="match status" value="1"/>
</dbReference>
<dbReference type="NCBIfam" id="NF003625">
    <property type="entry name" value="PRK05265.1-3"/>
    <property type="match status" value="1"/>
</dbReference>
<dbReference type="NCBIfam" id="NF003627">
    <property type="entry name" value="PRK05265.1-5"/>
    <property type="match status" value="1"/>
</dbReference>
<dbReference type="PANTHER" id="PTHR30456">
    <property type="entry name" value="PYRIDOXINE 5'-PHOSPHATE SYNTHASE"/>
    <property type="match status" value="1"/>
</dbReference>
<dbReference type="PANTHER" id="PTHR30456:SF0">
    <property type="entry name" value="PYRIDOXINE 5'-PHOSPHATE SYNTHASE"/>
    <property type="match status" value="1"/>
</dbReference>
<dbReference type="Pfam" id="PF03740">
    <property type="entry name" value="PdxJ"/>
    <property type="match status" value="1"/>
</dbReference>
<dbReference type="SUPFAM" id="SSF63892">
    <property type="entry name" value="Pyridoxine 5'-phosphate synthase"/>
    <property type="match status" value="1"/>
</dbReference>
<evidence type="ECO:0000255" key="1">
    <source>
        <dbReference type="HAMAP-Rule" id="MF_00279"/>
    </source>
</evidence>
<feature type="chain" id="PRO_0000190121" description="Pyridoxine 5'-phosphate synthase">
    <location>
        <begin position="1"/>
        <end position="242"/>
    </location>
</feature>
<feature type="active site" description="Proton acceptor" evidence="1">
    <location>
        <position position="42"/>
    </location>
</feature>
<feature type="active site" description="Proton acceptor" evidence="1">
    <location>
        <position position="69"/>
    </location>
</feature>
<feature type="active site" description="Proton donor" evidence="1">
    <location>
        <position position="190"/>
    </location>
</feature>
<feature type="binding site" evidence="1">
    <location>
        <position position="6"/>
    </location>
    <ligand>
        <name>3-amino-2-oxopropyl phosphate</name>
        <dbReference type="ChEBI" id="CHEBI:57279"/>
    </ligand>
</feature>
<feature type="binding site" evidence="1">
    <location>
        <begin position="8"/>
        <end position="9"/>
    </location>
    <ligand>
        <name>1-deoxy-D-xylulose 5-phosphate</name>
        <dbReference type="ChEBI" id="CHEBI:57792"/>
    </ligand>
</feature>
<feature type="binding site" evidence="1">
    <location>
        <position position="17"/>
    </location>
    <ligand>
        <name>3-amino-2-oxopropyl phosphate</name>
        <dbReference type="ChEBI" id="CHEBI:57279"/>
    </ligand>
</feature>
<feature type="binding site" evidence="1">
    <location>
        <position position="44"/>
    </location>
    <ligand>
        <name>1-deoxy-D-xylulose 5-phosphate</name>
        <dbReference type="ChEBI" id="CHEBI:57792"/>
    </ligand>
</feature>
<feature type="binding site" evidence="1">
    <location>
        <position position="49"/>
    </location>
    <ligand>
        <name>1-deoxy-D-xylulose 5-phosphate</name>
        <dbReference type="ChEBI" id="CHEBI:57792"/>
    </ligand>
</feature>
<feature type="binding site" evidence="1">
    <location>
        <position position="99"/>
    </location>
    <ligand>
        <name>1-deoxy-D-xylulose 5-phosphate</name>
        <dbReference type="ChEBI" id="CHEBI:57792"/>
    </ligand>
</feature>
<feature type="binding site" evidence="1">
    <location>
        <position position="191"/>
    </location>
    <ligand>
        <name>3-amino-2-oxopropyl phosphate</name>
        <dbReference type="ChEBI" id="CHEBI:57279"/>
    </ligand>
</feature>
<feature type="binding site" evidence="1">
    <location>
        <begin position="212"/>
        <end position="213"/>
    </location>
    <ligand>
        <name>3-amino-2-oxopropyl phosphate</name>
        <dbReference type="ChEBI" id="CHEBI:57279"/>
    </ligand>
</feature>
<feature type="site" description="Transition state stabilizer" evidence="1">
    <location>
        <position position="150"/>
    </location>
</feature>
<name>PDXJ_NEIMC</name>
<organism>
    <name type="scientific">Neisseria meningitidis serogroup C</name>
    <dbReference type="NCBI Taxonomy" id="135720"/>
    <lineage>
        <taxon>Bacteria</taxon>
        <taxon>Pseudomonadati</taxon>
        <taxon>Pseudomonadota</taxon>
        <taxon>Betaproteobacteria</taxon>
        <taxon>Neisseriales</taxon>
        <taxon>Neisseriaceae</taxon>
        <taxon>Neisseria</taxon>
    </lineage>
</organism>
<gene>
    <name evidence="1" type="primary">pdxJ</name>
</gene>
<reference key="1">
    <citation type="submission" date="1999-10" db="EMBL/GenBank/DDBJ databases">
        <title>Frequent horizontal genetic exchange between Neisseria meningitidis and commensal neisseriae.</title>
        <authorList>
            <person name="Linz B."/>
            <person name="Schenker M."/>
            <person name="Achtman M."/>
        </authorList>
    </citation>
    <scope>NUCLEOTIDE SEQUENCE [GENOMIC DNA]</scope>
    <source>
        <strain>Z4400 / Serogroup C</strain>
    </source>
</reference>
<keyword id="KW-0963">Cytoplasm</keyword>
<keyword id="KW-0664">Pyridoxine biosynthesis</keyword>
<keyword id="KW-0808">Transferase</keyword>
<accession>Q9RML6</accession>